<protein>
    <recommendedName>
        <fullName evidence="1">Acetyl-coenzyme A carboxylase carboxyl transferase subunit alpha</fullName>
        <shortName evidence="1">ACCase subunit alpha</shortName>
        <shortName evidence="1">Acetyl-CoA carboxylase carboxyltransferase subunit alpha</shortName>
        <ecNumber evidence="1">2.1.3.15</ecNumber>
    </recommendedName>
</protein>
<name>ACCA_YERPA</name>
<feature type="chain" id="PRO_1000062701" description="Acetyl-coenzyme A carboxylase carboxyl transferase subunit alpha">
    <location>
        <begin position="1"/>
        <end position="319"/>
    </location>
</feature>
<feature type="domain" description="CoA carboxyltransferase C-terminal" evidence="2">
    <location>
        <begin position="35"/>
        <end position="296"/>
    </location>
</feature>
<gene>
    <name evidence="1" type="primary">accA</name>
    <name type="ordered locus">YPA_0536</name>
</gene>
<proteinExistence type="inferred from homology"/>
<dbReference type="EC" id="2.1.3.15" evidence="1"/>
<dbReference type="EMBL" id="CP000308">
    <property type="protein sequence ID" value="ABG12504.1"/>
    <property type="molecule type" value="Genomic_DNA"/>
</dbReference>
<dbReference type="RefSeq" id="WP_002212147.1">
    <property type="nucleotide sequence ID" value="NZ_CP009906.1"/>
</dbReference>
<dbReference type="SMR" id="Q1CAL8"/>
<dbReference type="GeneID" id="57977501"/>
<dbReference type="KEGG" id="ypa:YPA_0536"/>
<dbReference type="UniPathway" id="UPA00655">
    <property type="reaction ID" value="UER00711"/>
</dbReference>
<dbReference type="Proteomes" id="UP000001971">
    <property type="component" value="Chromosome"/>
</dbReference>
<dbReference type="GO" id="GO:0009317">
    <property type="term" value="C:acetyl-CoA carboxylase complex"/>
    <property type="evidence" value="ECO:0007669"/>
    <property type="project" value="InterPro"/>
</dbReference>
<dbReference type="GO" id="GO:0003989">
    <property type="term" value="F:acetyl-CoA carboxylase activity"/>
    <property type="evidence" value="ECO:0007669"/>
    <property type="project" value="InterPro"/>
</dbReference>
<dbReference type="GO" id="GO:0005524">
    <property type="term" value="F:ATP binding"/>
    <property type="evidence" value="ECO:0007669"/>
    <property type="project" value="UniProtKB-KW"/>
</dbReference>
<dbReference type="GO" id="GO:0016743">
    <property type="term" value="F:carboxyl- or carbamoyltransferase activity"/>
    <property type="evidence" value="ECO:0007669"/>
    <property type="project" value="UniProtKB-UniRule"/>
</dbReference>
<dbReference type="GO" id="GO:0006633">
    <property type="term" value="P:fatty acid biosynthetic process"/>
    <property type="evidence" value="ECO:0007669"/>
    <property type="project" value="UniProtKB-KW"/>
</dbReference>
<dbReference type="GO" id="GO:2001295">
    <property type="term" value="P:malonyl-CoA biosynthetic process"/>
    <property type="evidence" value="ECO:0007669"/>
    <property type="project" value="UniProtKB-UniRule"/>
</dbReference>
<dbReference type="FunFam" id="3.90.226.10:FF:000008">
    <property type="entry name" value="Acetyl-coenzyme A carboxylase carboxyl transferase subunit alpha"/>
    <property type="match status" value="1"/>
</dbReference>
<dbReference type="Gene3D" id="3.90.226.10">
    <property type="entry name" value="2-enoyl-CoA Hydratase, Chain A, domain 1"/>
    <property type="match status" value="1"/>
</dbReference>
<dbReference type="HAMAP" id="MF_00823">
    <property type="entry name" value="AcetylCoA_CT_alpha"/>
    <property type="match status" value="1"/>
</dbReference>
<dbReference type="InterPro" id="IPR001095">
    <property type="entry name" value="Acetyl_CoA_COase_a_su"/>
</dbReference>
<dbReference type="InterPro" id="IPR029045">
    <property type="entry name" value="ClpP/crotonase-like_dom_sf"/>
</dbReference>
<dbReference type="InterPro" id="IPR011763">
    <property type="entry name" value="COA_CT_C"/>
</dbReference>
<dbReference type="NCBIfam" id="TIGR00513">
    <property type="entry name" value="accA"/>
    <property type="match status" value="1"/>
</dbReference>
<dbReference type="NCBIfam" id="NF041504">
    <property type="entry name" value="AccA_sub"/>
    <property type="match status" value="1"/>
</dbReference>
<dbReference type="NCBIfam" id="NF004344">
    <property type="entry name" value="PRK05724.1"/>
    <property type="match status" value="1"/>
</dbReference>
<dbReference type="PANTHER" id="PTHR42853">
    <property type="entry name" value="ACETYL-COENZYME A CARBOXYLASE CARBOXYL TRANSFERASE SUBUNIT ALPHA"/>
    <property type="match status" value="1"/>
</dbReference>
<dbReference type="PANTHER" id="PTHR42853:SF3">
    <property type="entry name" value="ACETYL-COENZYME A CARBOXYLASE CARBOXYL TRANSFERASE SUBUNIT ALPHA, CHLOROPLASTIC"/>
    <property type="match status" value="1"/>
</dbReference>
<dbReference type="Pfam" id="PF03255">
    <property type="entry name" value="ACCA"/>
    <property type="match status" value="1"/>
</dbReference>
<dbReference type="PRINTS" id="PR01069">
    <property type="entry name" value="ACCCTRFRASEA"/>
</dbReference>
<dbReference type="SUPFAM" id="SSF52096">
    <property type="entry name" value="ClpP/crotonase"/>
    <property type="match status" value="1"/>
</dbReference>
<dbReference type="PROSITE" id="PS50989">
    <property type="entry name" value="COA_CT_CTER"/>
    <property type="match status" value="1"/>
</dbReference>
<accession>Q1CAL8</accession>
<evidence type="ECO:0000255" key="1">
    <source>
        <dbReference type="HAMAP-Rule" id="MF_00823"/>
    </source>
</evidence>
<evidence type="ECO:0000255" key="2">
    <source>
        <dbReference type="PROSITE-ProRule" id="PRU01137"/>
    </source>
</evidence>
<keyword id="KW-0067">ATP-binding</keyword>
<keyword id="KW-0963">Cytoplasm</keyword>
<keyword id="KW-0275">Fatty acid biosynthesis</keyword>
<keyword id="KW-0276">Fatty acid metabolism</keyword>
<keyword id="KW-0444">Lipid biosynthesis</keyword>
<keyword id="KW-0443">Lipid metabolism</keyword>
<keyword id="KW-0547">Nucleotide-binding</keyword>
<keyword id="KW-0808">Transferase</keyword>
<reference key="1">
    <citation type="journal article" date="2006" name="J. Bacteriol.">
        <title>Complete genome sequence of Yersinia pestis strains Antiqua and Nepal516: evidence of gene reduction in an emerging pathogen.</title>
        <authorList>
            <person name="Chain P.S.G."/>
            <person name="Hu P."/>
            <person name="Malfatti S.A."/>
            <person name="Radnedge L."/>
            <person name="Larimer F."/>
            <person name="Vergez L.M."/>
            <person name="Worsham P."/>
            <person name="Chu M.C."/>
            <person name="Andersen G.L."/>
        </authorList>
    </citation>
    <scope>NUCLEOTIDE SEQUENCE [LARGE SCALE GENOMIC DNA]</scope>
    <source>
        <strain>Antiqua</strain>
    </source>
</reference>
<organism>
    <name type="scientific">Yersinia pestis bv. Antiqua (strain Antiqua)</name>
    <dbReference type="NCBI Taxonomy" id="360102"/>
    <lineage>
        <taxon>Bacteria</taxon>
        <taxon>Pseudomonadati</taxon>
        <taxon>Pseudomonadota</taxon>
        <taxon>Gammaproteobacteria</taxon>
        <taxon>Enterobacterales</taxon>
        <taxon>Yersiniaceae</taxon>
        <taxon>Yersinia</taxon>
    </lineage>
</organism>
<comment type="function">
    <text evidence="1">Component of the acetyl coenzyme A carboxylase (ACC) complex. First, biotin carboxylase catalyzes the carboxylation of biotin on its carrier protein (BCCP) and then the CO(2) group is transferred by the carboxyltransferase to acetyl-CoA to form malonyl-CoA.</text>
</comment>
<comment type="catalytic activity">
    <reaction evidence="1">
        <text>N(6)-carboxybiotinyl-L-lysyl-[protein] + acetyl-CoA = N(6)-biotinyl-L-lysyl-[protein] + malonyl-CoA</text>
        <dbReference type="Rhea" id="RHEA:54728"/>
        <dbReference type="Rhea" id="RHEA-COMP:10505"/>
        <dbReference type="Rhea" id="RHEA-COMP:10506"/>
        <dbReference type="ChEBI" id="CHEBI:57288"/>
        <dbReference type="ChEBI" id="CHEBI:57384"/>
        <dbReference type="ChEBI" id="CHEBI:83144"/>
        <dbReference type="ChEBI" id="CHEBI:83145"/>
        <dbReference type="EC" id="2.1.3.15"/>
    </reaction>
</comment>
<comment type="pathway">
    <text evidence="1">Lipid metabolism; malonyl-CoA biosynthesis; malonyl-CoA from acetyl-CoA: step 1/1.</text>
</comment>
<comment type="subunit">
    <text evidence="1">Acetyl-CoA carboxylase is a heterohexamer composed of biotin carboxyl carrier protein (AccB), biotin carboxylase (AccC) and two subunits each of ACCase subunit alpha (AccA) and ACCase subunit beta (AccD).</text>
</comment>
<comment type="subcellular location">
    <subcellularLocation>
        <location evidence="1">Cytoplasm</location>
    </subcellularLocation>
</comment>
<comment type="similarity">
    <text evidence="1">Belongs to the AccA family.</text>
</comment>
<sequence length="319" mass="35496">MSLNFLDFEQPIAELEAKIDSLTAVSRQDEKLDINLDEEVQRLREKSVELTRKIFSDLGAWQIAQLARHPRRPYTLDYIANIFTDFEELAGDRAYADDKAIVGGIARLDGRPVMIIGHQKGRETKEKIRRNFGMPAPEGYRKALRLMEMAERFKLPIITFIDTPGAYPGVGAEERGQSEAIARNLREMSRLNVPIVCTVIGEGGSGGALAIGVGDKVNMLQYSTYSVISPEGCASILWKSADKAPLAAEAMGITAHRLKELKMIDSVIPEPLGGAHRDYAAIAISLKAQLLADLNDLDVLNDEELLNRRYQRLMNYGYC</sequence>